<accession>Q5EHP2</accession>
<keyword id="KW-0165">Cleavage on pair of basic residues</keyword>
<keyword id="KW-0903">Direct protein sequencing</keyword>
<keyword id="KW-1015">Disulfide bond</keyword>
<keyword id="KW-0964">Secreted</keyword>
<keyword id="KW-0732">Signal</keyword>
<keyword id="KW-0800">Toxin</keyword>
<evidence type="ECO:0000250" key="1"/>
<evidence type="ECO:0000250" key="2">
    <source>
        <dbReference type="UniProtKB" id="Q5EHP3"/>
    </source>
</evidence>
<evidence type="ECO:0000255" key="3"/>
<evidence type="ECO:0000269" key="4">
    <source>
    </source>
</evidence>
<evidence type="ECO:0000303" key="5">
    <source>
    </source>
</evidence>
<evidence type="ECO:0000305" key="6"/>
<evidence type="ECO:0000305" key="7">
    <source>
    </source>
</evidence>
<evidence type="ECO:0000305" key="8">
    <source>
    </source>
</evidence>
<sequence length="70" mass="8102">MLKMGVVLFIFLVLFPLATLQLDADQPVERYAKNKQLFNPHKRRGIILRAPGKRCCHWNWCDHLCSCCGS</sequence>
<comment type="function">
    <text evidence="4">In vitro, inhibits proliferation of the mice ovarian cancer cells ID8.</text>
</comment>
<comment type="subcellular location">
    <subcellularLocation>
        <location evidence="4">Secreted</location>
    </subcellularLocation>
</comment>
<comment type="tissue specificity">
    <text evidence="7 8">Expressed by the venom duct.</text>
</comment>
<comment type="domain">
    <text evidence="6">The cysteine framework is III (CC-C-C-CC). Classified in the M-1 branch, since 1 residue stands between the fourth and the fifth cysteine residues.</text>
</comment>
<comment type="miscellaneous">
    <text evidence="4">Shows a very weak inhibition on Nav1.4 and Nav1.8 sodium channels.</text>
</comment>
<comment type="similarity">
    <text evidence="6">Belongs to the conotoxin M superfamily.</text>
</comment>
<organism>
    <name type="scientific">Conus marmoreus</name>
    <name type="common">Marble cone</name>
    <dbReference type="NCBI Taxonomy" id="42752"/>
    <lineage>
        <taxon>Eukaryota</taxon>
        <taxon>Metazoa</taxon>
        <taxon>Spiralia</taxon>
        <taxon>Lophotrochozoa</taxon>
        <taxon>Mollusca</taxon>
        <taxon>Gastropoda</taxon>
        <taxon>Caenogastropoda</taxon>
        <taxon>Neogastropoda</taxon>
        <taxon>Conoidea</taxon>
        <taxon>Conidae</taxon>
        <taxon>Conus</taxon>
    </lineage>
</organism>
<reference key="1">
    <citation type="journal article" date="2006" name="FEBS J.">
        <title>Characterization of novel M-superfamily conotoxins with new disulfide linkage.</title>
        <authorList>
            <person name="Han Y.-H."/>
            <person name="Wang Q."/>
            <person name="Jiang H."/>
            <person name="Liu L."/>
            <person name="Xiao C."/>
            <person name="Yuan D.-D."/>
            <person name="Shao X.-X."/>
            <person name="Dai Q.-Y."/>
            <person name="Cheng J.-S."/>
            <person name="Chi C.-W."/>
        </authorList>
    </citation>
    <scope>NUCLEOTIDE SEQUENCE [MRNA]</scope>
    <source>
        <tissue>Venom duct</tissue>
    </source>
</reference>
<reference key="2">
    <citation type="journal article" date="2022" name="Molecules">
        <title>Anti-ovarian cancer conotoxins identified from Conus venom.</title>
        <authorList>
            <person name="Ju S."/>
            <person name="Zhang Y."/>
            <person name="Guo X."/>
            <person name="Yan Q."/>
            <person name="Liu S."/>
            <person name="Ma B."/>
            <person name="Zhang M."/>
            <person name="Bao J."/>
            <person name="Luo S."/>
            <person name="Fu Y."/>
        </authorList>
    </citation>
    <scope>PROTEIN SEQUENCE OF 55-70</scope>
    <scope>IDENTIFICATION BY MASS SPECTROMETRY</scope>
    <scope>FUNCTION</scope>
    <scope>SUBCELLULAR LOCATION</scope>
    <scope>DISULFIDE BONDS</scope>
    <scope>SYNTHESIS OF 55-70</scope>
    <source>
        <tissue>Venom</tissue>
    </source>
</reference>
<feature type="signal peptide" evidence="3">
    <location>
        <begin position="1"/>
        <end position="24"/>
    </location>
</feature>
<feature type="propeptide" id="PRO_0000289869" evidence="1">
    <location>
        <begin position="25"/>
        <end position="54"/>
    </location>
</feature>
<feature type="peptide" id="PRO_0000289870" description="Conotoxin Mr3.8" evidence="4">
    <location>
        <begin position="55"/>
        <end position="70"/>
    </location>
</feature>
<feature type="disulfide bond" evidence="2 4">
    <location>
        <begin position="55"/>
        <end position="67"/>
    </location>
</feature>
<feature type="disulfide bond" evidence="4">
    <location>
        <begin position="56"/>
        <end position="68"/>
    </location>
</feature>
<feature type="disulfide bond" evidence="4">
    <location>
        <begin position="61"/>
        <end position="65"/>
    </location>
</feature>
<name>CM38_CONMR</name>
<dbReference type="EMBL" id="AY880684">
    <property type="protein sequence ID" value="AAW78561.1"/>
    <property type="molecule type" value="mRNA"/>
</dbReference>
<dbReference type="ConoServer" id="1082">
    <property type="toxin name" value="Mr3.8 precursor"/>
</dbReference>
<dbReference type="GO" id="GO:0005576">
    <property type="term" value="C:extracellular region"/>
    <property type="evidence" value="ECO:0007669"/>
    <property type="project" value="UniProtKB-SubCell"/>
</dbReference>
<dbReference type="GO" id="GO:0008200">
    <property type="term" value="F:ion channel inhibitor activity"/>
    <property type="evidence" value="ECO:0007669"/>
    <property type="project" value="InterPro"/>
</dbReference>
<dbReference type="GO" id="GO:0090729">
    <property type="term" value="F:toxin activity"/>
    <property type="evidence" value="ECO:0007669"/>
    <property type="project" value="UniProtKB-KW"/>
</dbReference>
<dbReference type="InterPro" id="IPR004214">
    <property type="entry name" value="Conotoxin"/>
</dbReference>
<dbReference type="Pfam" id="PF02950">
    <property type="entry name" value="Conotoxin"/>
    <property type="match status" value="1"/>
</dbReference>
<protein>
    <recommendedName>
        <fullName evidence="5">Conotoxin Mr3.8</fullName>
    </recommendedName>
</protein>
<proteinExistence type="evidence at protein level"/>